<proteinExistence type="evidence at transcript level"/>
<accession>Q4R720</accession>
<comment type="function">
    <text evidence="2 3">Chaperone that specifically binds and folds nascent G alpha proteins prior to G protein heterotrimer formation, promoting their stability and activity: folds GNAI1, GNAO1, GNA13 and GNAQ. Does not fold G(s) G-alpha proteins GNAS nor GNAL. Also acts as a guanine nucleotide exchange factor (GEF) for G alpha proteins by stimulating exchange of bound GDP for free GTP. Involved in regulation of microtubule pulling forces during mitotic movement of chromosomes by stimulating G(i)-alpha protein (GNAI1), possibly leading to release G(i)-alpha-GTP and NuMA proteins from the NuMA-GPSM2-G(i)-alpha-GDP complex (By similarity). Also acts as an activator for G(q)-alpha (GNAQ) protein by enhancing the G(q)-coupled receptor-mediated ERK activation (By similarity).</text>
</comment>
<comment type="subunit">
    <text evidence="2 3">Interacts with GDP-bound G alpha proteins GNAI1, GNAO1 and GNAQ, and with GNA13 with lower affinity. Does not interact with G-alpha proteins when they are in complex with subunits beta and gamma. Interacts (via C-terminus) with RGS14; the interaction stimulates the dissociation of the complex between RGS14 and the active GTP-bound form of GNAI1 (By similarity). Interacts with NCS1; interaction is favored in the absence of Ca(2+) and myristoylation of NCS1 is not required (By similarity).</text>
</comment>
<comment type="subcellular location">
    <subcellularLocation>
        <location evidence="2">Cytoplasm</location>
        <location evidence="2">Cell cortex</location>
    </subcellularLocation>
    <subcellularLocation>
        <location evidence="2">Cytoplasm</location>
    </subcellularLocation>
</comment>
<comment type="PTM">
    <text evidence="2">Phosphorylated at Ser-435 and Thr-440 by CK2, stabilizing its interface with G alpha proteins.</text>
</comment>
<comment type="similarity">
    <text evidence="4">Belongs to the synembryn family.</text>
</comment>
<protein>
    <recommendedName>
        <fullName>Chaperone Ric-8A</fullName>
    </recommendedName>
    <alternativeName>
        <fullName>Synembryn-A</fullName>
    </alternativeName>
</protein>
<keyword id="KW-0143">Chaperone</keyword>
<keyword id="KW-0963">Cytoplasm</keyword>
<keyword id="KW-0344">Guanine-nucleotide releasing factor</keyword>
<keyword id="KW-0597">Phosphoprotein</keyword>
<keyword id="KW-1185">Reference proteome</keyword>
<dbReference type="EMBL" id="AB169009">
    <property type="protein sequence ID" value="BAE01104.1"/>
    <property type="molecule type" value="mRNA"/>
</dbReference>
<dbReference type="SMR" id="Q4R720"/>
<dbReference type="STRING" id="9541.ENSMFAP00000021061"/>
<dbReference type="eggNOG" id="KOG4464">
    <property type="taxonomic scope" value="Eukaryota"/>
</dbReference>
<dbReference type="Proteomes" id="UP000233100">
    <property type="component" value="Unplaced"/>
</dbReference>
<dbReference type="GO" id="GO:0005938">
    <property type="term" value="C:cell cortex"/>
    <property type="evidence" value="ECO:0007669"/>
    <property type="project" value="UniProtKB-SubCell"/>
</dbReference>
<dbReference type="GO" id="GO:0005737">
    <property type="term" value="C:cytoplasm"/>
    <property type="evidence" value="ECO:0000250"/>
    <property type="project" value="UniProtKB"/>
</dbReference>
<dbReference type="GO" id="GO:0005886">
    <property type="term" value="C:plasma membrane"/>
    <property type="evidence" value="ECO:0000250"/>
    <property type="project" value="UniProtKB"/>
</dbReference>
<dbReference type="GO" id="GO:0001965">
    <property type="term" value="F:G-protein alpha-subunit binding"/>
    <property type="evidence" value="ECO:0000250"/>
    <property type="project" value="UniProtKB"/>
</dbReference>
<dbReference type="GO" id="GO:0005085">
    <property type="term" value="F:guanyl-nucleotide exchange factor activity"/>
    <property type="evidence" value="ECO:0000250"/>
    <property type="project" value="UniProtKB"/>
</dbReference>
<dbReference type="GO" id="GO:0044183">
    <property type="term" value="F:protein folding chaperone"/>
    <property type="evidence" value="ECO:0000250"/>
    <property type="project" value="UniProtKB"/>
</dbReference>
<dbReference type="GO" id="GO:0007186">
    <property type="term" value="P:G protein-coupled receptor signaling pathway"/>
    <property type="evidence" value="ECO:0000250"/>
    <property type="project" value="UniProtKB"/>
</dbReference>
<dbReference type="FunFam" id="1.25.10.10:FF:000447">
    <property type="entry name" value="RIC8 guanine nucleotide exchange factor A"/>
    <property type="match status" value="1"/>
</dbReference>
<dbReference type="Gene3D" id="1.25.10.10">
    <property type="entry name" value="Leucine-rich Repeat Variant"/>
    <property type="match status" value="1"/>
</dbReference>
<dbReference type="InterPro" id="IPR011989">
    <property type="entry name" value="ARM-like"/>
</dbReference>
<dbReference type="InterPro" id="IPR016024">
    <property type="entry name" value="ARM-type_fold"/>
</dbReference>
<dbReference type="InterPro" id="IPR008376">
    <property type="entry name" value="Chaperone_Ric-8_A/B"/>
</dbReference>
<dbReference type="InterPro" id="IPR019318">
    <property type="entry name" value="Gua_nucleotide_exch_fac_Ric8"/>
</dbReference>
<dbReference type="PANTHER" id="PTHR12425">
    <property type="entry name" value="SYNEMBRYN"/>
    <property type="match status" value="1"/>
</dbReference>
<dbReference type="PANTHER" id="PTHR12425:SF4">
    <property type="entry name" value="SYNEMBRYN-A"/>
    <property type="match status" value="1"/>
</dbReference>
<dbReference type="Pfam" id="PF10165">
    <property type="entry name" value="Ric8"/>
    <property type="match status" value="1"/>
</dbReference>
<dbReference type="PRINTS" id="PR01802">
    <property type="entry name" value="SYNEMBRYN"/>
</dbReference>
<dbReference type="SUPFAM" id="SSF48371">
    <property type="entry name" value="ARM repeat"/>
    <property type="match status" value="1"/>
</dbReference>
<evidence type="ECO:0000250" key="1">
    <source>
        <dbReference type="UniProtKB" id="Q3TIR3"/>
    </source>
</evidence>
<evidence type="ECO:0000250" key="2">
    <source>
        <dbReference type="UniProtKB" id="Q80ZG1"/>
    </source>
</evidence>
<evidence type="ECO:0000250" key="3">
    <source>
        <dbReference type="UniProtKB" id="Q9NPQ8"/>
    </source>
</evidence>
<evidence type="ECO:0000305" key="4"/>
<name>RIC8A_MACFA</name>
<gene>
    <name type="primary">RIC8A</name>
    <name type="ORF">QtsA-16530</name>
</gene>
<sequence length="530" mass="59661">MEPRAVAEAVETGKEDVIMEALRSYNQEHSQSFTFDDAQQEDRKRLAELLVSVLEQGLPPSHRVTWLQSVRILSRDRNCLDPFTSRQSLQALACYADISGSEGSVPDSPDMDVVLESLKCLCNLVLSSPVAQMLAAEARLVVKLTERVGLYRERSFPHDVQFFDLRLLFLLTALRTDVRQQLFQELKGVHLLTDTLELTLAVTPEGNPPKLLPSQETERAMEILKVLFNITLDSIKGEVDEEDAALYRHLGTLLRHCVMIATAGDRTEEFHGHAVNLLGNLPLKCLDVLLTLEPHEDSVEFMGVNMDVIRALLIFLEKRLHQTHRLKESVAPVLSVLTECARMHRPARKFLKAQVLPPLRDVRTRPEVGEMLRNKLVRLMTHLDTDVKRVAAEFLFVLCSESVPRFIKYTGYGNAAGLLAARGLMAGGRPEGQYSEDEDTDTDEYKEAKASINPVTGRVEEKPPNPMEGMTEEQKEHEAMKLVTMFDKLSRNRVIQPMGMSPRGHLTSLQDAMCETMEQQLSSDPDSDPD</sequence>
<feature type="chain" id="PRO_0000235891" description="Chaperone Ric-8A">
    <location>
        <begin position="1"/>
        <end position="530"/>
    </location>
</feature>
<feature type="modified residue" description="Phosphoserine" evidence="3">
    <location>
        <position position="435"/>
    </location>
</feature>
<feature type="modified residue" description="Phosphothreonine" evidence="3">
    <location>
        <position position="440"/>
    </location>
</feature>
<feature type="modified residue" description="Phosphothreonine" evidence="1">
    <location>
        <position position="442"/>
    </location>
</feature>
<feature type="modified residue" description="Phosphoserine" evidence="3">
    <location>
        <position position="501"/>
    </location>
</feature>
<feature type="modified residue" description="Phosphoserine" evidence="3">
    <location>
        <position position="522"/>
    </location>
</feature>
<feature type="modified residue" description="Phosphoserine" evidence="3">
    <location>
        <position position="523"/>
    </location>
</feature>
<feature type="modified residue" description="Phosphoserine" evidence="3">
    <location>
        <position position="527"/>
    </location>
</feature>
<reference key="1">
    <citation type="submission" date="2005-06" db="EMBL/GenBank/DDBJ databases">
        <title>DNA sequences of macaque genes expressed in brain or testis and its evolutionary implications.</title>
        <authorList>
            <consortium name="International consortium for macaque cDNA sequencing and analysis"/>
        </authorList>
    </citation>
    <scope>NUCLEOTIDE SEQUENCE [LARGE SCALE MRNA]</scope>
    <source>
        <tissue>Testis</tissue>
    </source>
</reference>
<organism>
    <name type="scientific">Macaca fascicularis</name>
    <name type="common">Crab-eating macaque</name>
    <name type="synonym">Cynomolgus monkey</name>
    <dbReference type="NCBI Taxonomy" id="9541"/>
    <lineage>
        <taxon>Eukaryota</taxon>
        <taxon>Metazoa</taxon>
        <taxon>Chordata</taxon>
        <taxon>Craniata</taxon>
        <taxon>Vertebrata</taxon>
        <taxon>Euteleostomi</taxon>
        <taxon>Mammalia</taxon>
        <taxon>Eutheria</taxon>
        <taxon>Euarchontoglires</taxon>
        <taxon>Primates</taxon>
        <taxon>Haplorrhini</taxon>
        <taxon>Catarrhini</taxon>
        <taxon>Cercopithecidae</taxon>
        <taxon>Cercopithecinae</taxon>
        <taxon>Macaca</taxon>
    </lineage>
</organism>